<feature type="chain" id="PRO_0000203127" description="Uncharacterized protein YJR146W">
    <location>
        <begin position="1"/>
        <end position="117"/>
    </location>
</feature>
<dbReference type="EMBL" id="Z49646">
    <property type="protein sequence ID" value="CAA89679.1"/>
    <property type="molecule type" value="Genomic_DNA"/>
</dbReference>
<dbReference type="EMBL" id="AY558259">
    <property type="protein sequence ID" value="AAS56585.1"/>
    <property type="molecule type" value="Genomic_DNA"/>
</dbReference>
<dbReference type="EMBL" id="BK006943">
    <property type="protein sequence ID" value="DAA35121.1"/>
    <property type="molecule type" value="Genomic_DNA"/>
</dbReference>
<dbReference type="PIR" id="S57175">
    <property type="entry name" value="S57175"/>
</dbReference>
<dbReference type="RefSeq" id="NP_001257683.1">
    <property type="nucleotide sequence ID" value="NM_001270754.1"/>
</dbReference>
<dbReference type="BioGRID" id="300670">
    <property type="interactions" value="36"/>
</dbReference>
<dbReference type="DIP" id="DIP-4758N"/>
<dbReference type="FunCoup" id="P47174">
    <property type="interactions" value="59"/>
</dbReference>
<dbReference type="STRING" id="4932.YJR146W"/>
<dbReference type="PaxDb" id="4932-YJR146W"/>
<dbReference type="EnsemblFungi" id="YJR146W_mRNA">
    <property type="protein sequence ID" value="YJR146W"/>
    <property type="gene ID" value="YJR146W"/>
</dbReference>
<dbReference type="GeneID" id="853611"/>
<dbReference type="KEGG" id="sce:YJR146W"/>
<dbReference type="AGR" id="SGD:S000003907"/>
<dbReference type="SGD" id="S000003907">
    <property type="gene designation" value="YJR146W"/>
</dbReference>
<dbReference type="VEuPathDB" id="FungiDB:YJR146W"/>
<dbReference type="HOGENOM" id="CLU_2086670_0_0_1"/>
<dbReference type="InParanoid" id="P47174"/>
<dbReference type="BioCyc" id="YEAST:G3O-31760-MONOMER"/>
<dbReference type="BioGRID-ORCS" id="853611">
    <property type="hits" value="0 hits in 10 CRISPR screens"/>
</dbReference>
<dbReference type="PRO" id="PR:P47174"/>
<dbReference type="Proteomes" id="UP000002311">
    <property type="component" value="Chromosome X"/>
</dbReference>
<dbReference type="RNAct" id="P47174">
    <property type="molecule type" value="protein"/>
</dbReference>
<dbReference type="GO" id="GO:0005737">
    <property type="term" value="C:cytoplasm"/>
    <property type="evidence" value="ECO:0007669"/>
    <property type="project" value="UniProtKB-SubCell"/>
</dbReference>
<dbReference type="GO" id="GO:0005634">
    <property type="term" value="C:nucleus"/>
    <property type="evidence" value="ECO:0007669"/>
    <property type="project" value="UniProtKB-SubCell"/>
</dbReference>
<sequence>MKVGKAKKKPEIFSAHCSVATAFLDPSFFYPNFVAQKASHYNDKTGSANIWTYISRTGSLLLFTQVVYRKSKWTHQSATFADCIYCQSGQSPSVSLSCSDARQTWMQHRGWSSLMSL</sequence>
<keyword id="KW-0963">Cytoplasm</keyword>
<keyword id="KW-0539">Nucleus</keyword>
<keyword id="KW-1185">Reference proteome</keyword>
<evidence type="ECO:0000269" key="1">
    <source>
    </source>
</evidence>
<evidence type="ECO:0000269" key="2">
    <source>
    </source>
</evidence>
<reference key="1">
    <citation type="journal article" date="1996" name="EMBO J.">
        <title>Complete nucleotide sequence of Saccharomyces cerevisiae chromosome X.</title>
        <authorList>
            <person name="Galibert F."/>
            <person name="Alexandraki D."/>
            <person name="Baur A."/>
            <person name="Boles E."/>
            <person name="Chalwatzis N."/>
            <person name="Chuat J.-C."/>
            <person name="Coster F."/>
            <person name="Cziepluch C."/>
            <person name="de Haan M."/>
            <person name="Domdey H."/>
            <person name="Durand P."/>
            <person name="Entian K.-D."/>
            <person name="Gatius M."/>
            <person name="Goffeau A."/>
            <person name="Grivell L.A."/>
            <person name="Hennemann A."/>
            <person name="Herbert C.J."/>
            <person name="Heumann K."/>
            <person name="Hilger F."/>
            <person name="Hollenberg C.P."/>
            <person name="Huang M.-E."/>
            <person name="Jacq C."/>
            <person name="Jauniaux J.-C."/>
            <person name="Katsoulou C."/>
            <person name="Kirchrath L."/>
            <person name="Kleine K."/>
            <person name="Kordes E."/>
            <person name="Koetter P."/>
            <person name="Liebl S."/>
            <person name="Louis E.J."/>
            <person name="Manus V."/>
            <person name="Mewes H.-W."/>
            <person name="Miosga T."/>
            <person name="Obermaier B."/>
            <person name="Perea J."/>
            <person name="Pohl T.M."/>
            <person name="Portetelle D."/>
            <person name="Pujol A."/>
            <person name="Purnelle B."/>
            <person name="Ramezani Rad M."/>
            <person name="Rasmussen S.W."/>
            <person name="Rose M."/>
            <person name="Rossau R."/>
            <person name="Schaaff-Gerstenschlaeger I."/>
            <person name="Smits P.H.M."/>
            <person name="Scarcez T."/>
            <person name="Soriano N."/>
            <person name="To Van D."/>
            <person name="Tzermia M."/>
            <person name="Van Broekhoven A."/>
            <person name="Vandenbol M."/>
            <person name="Wedler H."/>
            <person name="von Wettstein D."/>
            <person name="Wambutt R."/>
            <person name="Zagulski M."/>
            <person name="Zollner A."/>
            <person name="Karpfinger-Hartl L."/>
        </authorList>
    </citation>
    <scope>NUCLEOTIDE SEQUENCE [LARGE SCALE GENOMIC DNA]</scope>
    <source>
        <strain>ATCC 204508 / S288c</strain>
    </source>
</reference>
<reference key="2">
    <citation type="journal article" date="2014" name="G3 (Bethesda)">
        <title>The reference genome sequence of Saccharomyces cerevisiae: Then and now.</title>
        <authorList>
            <person name="Engel S.R."/>
            <person name="Dietrich F.S."/>
            <person name="Fisk D.G."/>
            <person name="Binkley G."/>
            <person name="Balakrishnan R."/>
            <person name="Costanzo M.C."/>
            <person name="Dwight S.S."/>
            <person name="Hitz B.C."/>
            <person name="Karra K."/>
            <person name="Nash R.S."/>
            <person name="Weng S."/>
            <person name="Wong E.D."/>
            <person name="Lloyd P."/>
            <person name="Skrzypek M.S."/>
            <person name="Miyasato S.R."/>
            <person name="Simison M."/>
            <person name="Cherry J.M."/>
        </authorList>
    </citation>
    <scope>GENOME REANNOTATION</scope>
    <source>
        <strain>ATCC 204508 / S288c</strain>
    </source>
</reference>
<reference key="3">
    <citation type="journal article" date="2007" name="Genome Res.">
        <title>Approaching a complete repository of sequence-verified protein-encoding clones for Saccharomyces cerevisiae.</title>
        <authorList>
            <person name="Hu Y."/>
            <person name="Rolfs A."/>
            <person name="Bhullar B."/>
            <person name="Murthy T.V.S."/>
            <person name="Zhu C."/>
            <person name="Berger M.F."/>
            <person name="Camargo A.A."/>
            <person name="Kelley F."/>
            <person name="McCarron S."/>
            <person name="Jepson D."/>
            <person name="Richardson A."/>
            <person name="Raphael J."/>
            <person name="Moreira D."/>
            <person name="Taycher E."/>
            <person name="Zuo D."/>
            <person name="Mohr S."/>
            <person name="Kane M.F."/>
            <person name="Williamson J."/>
            <person name="Simpson A.J.G."/>
            <person name="Bulyk M.L."/>
            <person name="Harlow E."/>
            <person name="Marsischky G."/>
            <person name="Kolodner R.D."/>
            <person name="LaBaer J."/>
        </authorList>
    </citation>
    <scope>NUCLEOTIDE SEQUENCE [GENOMIC DNA]</scope>
    <source>
        <strain>ATCC 204508 / S288c</strain>
    </source>
</reference>
<reference key="4">
    <citation type="journal article" date="2003" name="Nature">
        <title>Global analysis of protein localization in budding yeast.</title>
        <authorList>
            <person name="Huh W.-K."/>
            <person name="Falvo J.V."/>
            <person name="Gerke L.C."/>
            <person name="Carroll A.S."/>
            <person name="Howson R.W."/>
            <person name="Weissman J.S."/>
            <person name="O'Shea E.K."/>
        </authorList>
    </citation>
    <scope>SUBCELLULAR LOCATION [LARGE SCALE ANALYSIS]</scope>
</reference>
<reference key="5">
    <citation type="journal article" date="2003" name="Nature">
        <title>Global analysis of protein expression in yeast.</title>
        <authorList>
            <person name="Ghaemmaghami S."/>
            <person name="Huh W.-K."/>
            <person name="Bower K."/>
            <person name="Howson R.W."/>
            <person name="Belle A."/>
            <person name="Dephoure N."/>
            <person name="O'Shea E.K."/>
            <person name="Weissman J.S."/>
        </authorList>
    </citation>
    <scope>LEVEL OF PROTEIN EXPRESSION [LARGE SCALE ANALYSIS]</scope>
</reference>
<protein>
    <recommendedName>
        <fullName>Uncharacterized protein YJR146W</fullName>
    </recommendedName>
</protein>
<gene>
    <name type="ordered locus">YJR146W</name>
    <name type="ORF">J2200</name>
</gene>
<proteinExistence type="evidence at protein level"/>
<accession>P47174</accession>
<accession>I2HB67</accession>
<comment type="subcellular location">
    <subcellularLocation>
        <location evidence="1">Cytoplasm</location>
    </subcellularLocation>
    <subcellularLocation>
        <location evidence="1">Nucleus</location>
    </subcellularLocation>
</comment>
<comment type="miscellaneous">
    <text evidence="2">Present with 952 molecules/cell in log phase SD medium.</text>
</comment>
<organism>
    <name type="scientific">Saccharomyces cerevisiae (strain ATCC 204508 / S288c)</name>
    <name type="common">Baker's yeast</name>
    <dbReference type="NCBI Taxonomy" id="559292"/>
    <lineage>
        <taxon>Eukaryota</taxon>
        <taxon>Fungi</taxon>
        <taxon>Dikarya</taxon>
        <taxon>Ascomycota</taxon>
        <taxon>Saccharomycotina</taxon>
        <taxon>Saccharomycetes</taxon>
        <taxon>Saccharomycetales</taxon>
        <taxon>Saccharomycetaceae</taxon>
        <taxon>Saccharomyces</taxon>
    </lineage>
</organism>
<name>YJ9K_YEAST</name>